<evidence type="ECO:0000255" key="1">
    <source>
        <dbReference type="HAMAP-Rule" id="MF_00063"/>
    </source>
</evidence>
<keyword id="KW-0963">Cytoplasm</keyword>
<keyword id="KW-0560">Oxidoreductase</keyword>
<proteinExistence type="inferred from homology"/>
<protein>
    <recommendedName>
        <fullName evidence="1">Phosphoadenosine 5'-phosphosulfate reductase</fullName>
        <shortName evidence="1">PAPS reductase</shortName>
        <ecNumber evidence="1">1.8.4.8</ecNumber>
    </recommendedName>
    <alternativeName>
        <fullName evidence="1">3'-phosphoadenylylsulfate reductase</fullName>
    </alternativeName>
    <alternativeName>
        <fullName evidence="1">PAPS reductase, thioredoxin dependent</fullName>
    </alternativeName>
    <alternativeName>
        <fullName evidence="1">PAPS sulfotransferase</fullName>
    </alternativeName>
    <alternativeName>
        <fullName evidence="1">PAdoPS reductase</fullName>
    </alternativeName>
</protein>
<feature type="chain" id="PRO_1000008940" description="Phosphoadenosine 5'-phosphosulfate reductase">
    <location>
        <begin position="1"/>
        <end position="244"/>
    </location>
</feature>
<feature type="active site" description="Nucleophile; cysteine thiosulfonate intermediate" evidence="1">
    <location>
        <position position="239"/>
    </location>
</feature>
<name>CYSH_SODGM</name>
<comment type="function">
    <text evidence="1">Catalyzes the formation of sulfite from phosphoadenosine 5'-phosphosulfate (PAPS) using thioredoxin as an electron donor.</text>
</comment>
<comment type="catalytic activity">
    <reaction evidence="1">
        <text>[thioredoxin]-disulfide + sulfite + adenosine 3',5'-bisphosphate + 2 H(+) = [thioredoxin]-dithiol + 3'-phosphoadenylyl sulfate</text>
        <dbReference type="Rhea" id="RHEA:11724"/>
        <dbReference type="Rhea" id="RHEA-COMP:10698"/>
        <dbReference type="Rhea" id="RHEA-COMP:10700"/>
        <dbReference type="ChEBI" id="CHEBI:15378"/>
        <dbReference type="ChEBI" id="CHEBI:17359"/>
        <dbReference type="ChEBI" id="CHEBI:29950"/>
        <dbReference type="ChEBI" id="CHEBI:50058"/>
        <dbReference type="ChEBI" id="CHEBI:58339"/>
        <dbReference type="ChEBI" id="CHEBI:58343"/>
        <dbReference type="EC" id="1.8.4.8"/>
    </reaction>
</comment>
<comment type="pathway">
    <text evidence="1">Sulfur metabolism; hydrogen sulfide biosynthesis; sulfite from sulfate: step 3/3.</text>
</comment>
<comment type="subcellular location">
    <subcellularLocation>
        <location evidence="1">Cytoplasm</location>
    </subcellularLocation>
</comment>
<comment type="similarity">
    <text evidence="1">Belongs to the PAPS reductase family. CysH subfamily.</text>
</comment>
<reference key="1">
    <citation type="journal article" date="2006" name="Genome Res.">
        <title>Massive genome erosion and functional adaptations provide insights into the symbiotic lifestyle of Sodalis glossinidius in the tsetse host.</title>
        <authorList>
            <person name="Toh H."/>
            <person name="Weiss B.L."/>
            <person name="Perkin S.A.H."/>
            <person name="Yamashita A."/>
            <person name="Oshima K."/>
            <person name="Hattori M."/>
            <person name="Aksoy S."/>
        </authorList>
    </citation>
    <scope>NUCLEOTIDE SEQUENCE [LARGE SCALE GENOMIC DNA]</scope>
    <source>
        <strain>morsitans</strain>
    </source>
</reference>
<gene>
    <name evidence="1" type="primary">cysH</name>
    <name type="ordered locus">SG0518</name>
</gene>
<dbReference type="EC" id="1.8.4.8" evidence="1"/>
<dbReference type="EMBL" id="AP008232">
    <property type="protein sequence ID" value="BAE73793.1"/>
    <property type="molecule type" value="Genomic_DNA"/>
</dbReference>
<dbReference type="RefSeq" id="WP_011410491.1">
    <property type="nucleotide sequence ID" value="NC_007712.1"/>
</dbReference>
<dbReference type="SMR" id="Q2NVN2"/>
<dbReference type="STRING" id="343509.SG0518"/>
<dbReference type="KEGG" id="sgl:SG0518"/>
<dbReference type="eggNOG" id="COG0175">
    <property type="taxonomic scope" value="Bacteria"/>
</dbReference>
<dbReference type="HOGENOM" id="CLU_044089_3_0_6"/>
<dbReference type="OrthoDB" id="9794018at2"/>
<dbReference type="BioCyc" id="SGLO343509:SGP1_RS04605-MONOMER"/>
<dbReference type="UniPathway" id="UPA00140">
    <property type="reaction ID" value="UER00206"/>
</dbReference>
<dbReference type="Proteomes" id="UP000001932">
    <property type="component" value="Chromosome"/>
</dbReference>
<dbReference type="GO" id="GO:0005737">
    <property type="term" value="C:cytoplasm"/>
    <property type="evidence" value="ECO:0007669"/>
    <property type="project" value="UniProtKB-SubCell"/>
</dbReference>
<dbReference type="GO" id="GO:0004604">
    <property type="term" value="F:phosphoadenylyl-sulfate reductase (thioredoxin) activity"/>
    <property type="evidence" value="ECO:0007669"/>
    <property type="project" value="UniProtKB-UniRule"/>
</dbReference>
<dbReference type="GO" id="GO:0070814">
    <property type="term" value="P:hydrogen sulfide biosynthetic process"/>
    <property type="evidence" value="ECO:0007669"/>
    <property type="project" value="UniProtKB-UniRule"/>
</dbReference>
<dbReference type="GO" id="GO:0019379">
    <property type="term" value="P:sulfate assimilation, phosphoadenylyl sulfate reduction by phosphoadenylyl-sulfate reductase (thioredoxin)"/>
    <property type="evidence" value="ECO:0007669"/>
    <property type="project" value="UniProtKB-UniRule"/>
</dbReference>
<dbReference type="CDD" id="cd23945">
    <property type="entry name" value="PAPS_reductase"/>
    <property type="match status" value="1"/>
</dbReference>
<dbReference type="FunFam" id="3.40.50.620:FF:000043">
    <property type="entry name" value="Phosphoadenosine phosphosulfate reductase"/>
    <property type="match status" value="1"/>
</dbReference>
<dbReference type="Gene3D" id="3.40.50.620">
    <property type="entry name" value="HUPs"/>
    <property type="match status" value="1"/>
</dbReference>
<dbReference type="HAMAP" id="MF_00063">
    <property type="entry name" value="CysH"/>
    <property type="match status" value="1"/>
</dbReference>
<dbReference type="InterPro" id="IPR004511">
    <property type="entry name" value="PAPS/APS_Rdtase"/>
</dbReference>
<dbReference type="InterPro" id="IPR002500">
    <property type="entry name" value="PAPS_reduct_dom"/>
</dbReference>
<dbReference type="InterPro" id="IPR011800">
    <property type="entry name" value="PAPS_reductase_CysH"/>
</dbReference>
<dbReference type="InterPro" id="IPR014729">
    <property type="entry name" value="Rossmann-like_a/b/a_fold"/>
</dbReference>
<dbReference type="NCBIfam" id="TIGR00434">
    <property type="entry name" value="cysH"/>
    <property type="match status" value="1"/>
</dbReference>
<dbReference type="NCBIfam" id="TIGR02057">
    <property type="entry name" value="PAPS_reductase"/>
    <property type="match status" value="1"/>
</dbReference>
<dbReference type="NCBIfam" id="NF002537">
    <property type="entry name" value="PRK02090.1"/>
    <property type="match status" value="1"/>
</dbReference>
<dbReference type="PANTHER" id="PTHR46509">
    <property type="entry name" value="PHOSPHOADENOSINE PHOSPHOSULFATE REDUCTASE"/>
    <property type="match status" value="1"/>
</dbReference>
<dbReference type="PANTHER" id="PTHR46509:SF1">
    <property type="entry name" value="PHOSPHOADENOSINE PHOSPHOSULFATE REDUCTASE"/>
    <property type="match status" value="1"/>
</dbReference>
<dbReference type="Pfam" id="PF01507">
    <property type="entry name" value="PAPS_reduct"/>
    <property type="match status" value="1"/>
</dbReference>
<dbReference type="PIRSF" id="PIRSF000857">
    <property type="entry name" value="PAPS_reductase"/>
    <property type="match status" value="1"/>
</dbReference>
<dbReference type="SUPFAM" id="SSF52402">
    <property type="entry name" value="Adenine nucleotide alpha hydrolases-like"/>
    <property type="match status" value="1"/>
</dbReference>
<sequence>MSDWDLGELNALEKAQQTAALAAVNQQLESQTAEQRVAWALEHLPEQAVLSSSFGIQAAVSLRLVTRQRPDIPVILTDTGYLFPETYRFIDELTETLGLNLQIFRATTSPAWQEARYGKLWEQGVEGIERYNQLNKVEPMNRALATLGAGTWFAGLRREQSGSRAHLPVLAIQRGVFKLLPIIDWDNRQVYQYLTRHGLSYHPLWEQGYLSVGDTHTTRKCEPGMSEEETRFFGLKRECGLHEG</sequence>
<accession>Q2NVN2</accession>
<organism>
    <name type="scientific">Sodalis glossinidius (strain morsitans)</name>
    <dbReference type="NCBI Taxonomy" id="343509"/>
    <lineage>
        <taxon>Bacteria</taxon>
        <taxon>Pseudomonadati</taxon>
        <taxon>Pseudomonadota</taxon>
        <taxon>Gammaproteobacteria</taxon>
        <taxon>Enterobacterales</taxon>
        <taxon>Bruguierivoracaceae</taxon>
        <taxon>Sodalis</taxon>
    </lineage>
</organism>